<reference key="1">
    <citation type="journal article" date="2007" name="Am. Fern J.">
        <title>The complete plastid genome sequence of Angiopteris evecta (G. Forst.) Hoffm. (Marattiaceae).</title>
        <authorList>
            <person name="Roper J.M."/>
            <person name="Hansen S.K."/>
            <person name="Wolf P.G."/>
            <person name="Karol K.G."/>
            <person name="Mandoli D.F."/>
            <person name="Everett K.D.E."/>
            <person name="Kuehl J.V."/>
            <person name="Boore J.L."/>
        </authorList>
    </citation>
    <scope>NUCLEOTIDE SEQUENCE [LARGE SCALE GENOMIC DNA]</scope>
</reference>
<proteinExistence type="inferred from homology"/>
<sequence>MVNTNIRPDEISSSIRKEIEGYTQEVKVVNVGTVLQVGDGIARIYGLDKVMAGELVEFEDGTVGIALNSESDNVGAVLMGDGLTIQEGSSVKATGKIAQIPVSDAYLGRVVNALAQPIDGKGQIPASESRPIESPAPGIISRRSVYEPMQTGLIAIDSMIPIGRGQRELIIGDRQTGKTAVATDTILNQKGQNVICVYVAIGQKASSVAQVVNTFEERGAMEYTIVVAEAANSPATLQYLAPYTGAALAEYFMYRKQHTLIIYDDLSKQAQAYRQMSLLLRRPPGREAYPGDVFYLHSRLLERAAKSSSQLGEGSMTASPIVETQAGDVSAYIPTNVISITDGQIFLSADSFNAGIRPAINVGISVSRVGSAAQIKAMKQVAGKLKLELAQFAELEAFAQFASDLDKATQNQLARGQRLRELLKQSQSAPLAVEEQVATIYTGVNGFSDKLKVEQVKRFLVQLREYITTNKPQFGEIIRSTKMFTEQAENILKEAIEEHIELFLLQEK</sequence>
<evidence type="ECO:0000255" key="1">
    <source>
        <dbReference type="HAMAP-Rule" id="MF_01346"/>
    </source>
</evidence>
<comment type="function">
    <text evidence="1">Produces ATP from ADP in the presence of a proton gradient across the membrane. The alpha chain is a regulatory subunit.</text>
</comment>
<comment type="catalytic activity">
    <reaction evidence="1">
        <text>ATP + H2O + 4 H(+)(in) = ADP + phosphate + 5 H(+)(out)</text>
        <dbReference type="Rhea" id="RHEA:57720"/>
        <dbReference type="ChEBI" id="CHEBI:15377"/>
        <dbReference type="ChEBI" id="CHEBI:15378"/>
        <dbReference type="ChEBI" id="CHEBI:30616"/>
        <dbReference type="ChEBI" id="CHEBI:43474"/>
        <dbReference type="ChEBI" id="CHEBI:456216"/>
        <dbReference type="EC" id="7.1.2.2"/>
    </reaction>
</comment>
<comment type="subunit">
    <text evidence="1">F-type ATPases have 2 components, CF(1) - the catalytic core - and CF(0) - the membrane proton channel. CF(1) has five subunits: alpha(3), beta(3), gamma(1), delta(1), epsilon(1). CF(0) has four main subunits: a, b, b' and c.</text>
</comment>
<comment type="subcellular location">
    <subcellularLocation>
        <location evidence="1">Plastid</location>
        <location evidence="1">Chloroplast thylakoid membrane</location>
        <topology evidence="1">Peripheral membrane protein</topology>
    </subcellularLocation>
</comment>
<comment type="similarity">
    <text evidence="1">Belongs to the ATPase alpha/beta chains family.</text>
</comment>
<organism>
    <name type="scientific">Angiopteris evecta</name>
    <name type="common">Mule's foot fern</name>
    <name type="synonym">Polypodium evectum</name>
    <dbReference type="NCBI Taxonomy" id="13825"/>
    <lineage>
        <taxon>Eukaryota</taxon>
        <taxon>Viridiplantae</taxon>
        <taxon>Streptophyta</taxon>
        <taxon>Embryophyta</taxon>
        <taxon>Tracheophyta</taxon>
        <taxon>Polypodiopsida</taxon>
        <taxon>Marattiidae</taxon>
        <taxon>Marattiales</taxon>
        <taxon>Marattiaceae</taxon>
        <taxon>Angiopteris</taxon>
    </lineage>
</organism>
<geneLocation type="chloroplast"/>
<accession>A2T317</accession>
<feature type="chain" id="PRO_0000339070" description="ATP synthase subunit alpha, chloroplastic">
    <location>
        <begin position="1"/>
        <end position="508"/>
    </location>
</feature>
<feature type="binding site" evidence="1">
    <location>
        <begin position="172"/>
        <end position="179"/>
    </location>
    <ligand>
        <name>ATP</name>
        <dbReference type="ChEBI" id="CHEBI:30616"/>
    </ligand>
</feature>
<feature type="site" description="Required for activity" evidence="1">
    <location>
        <position position="365"/>
    </location>
</feature>
<dbReference type="EC" id="7.1.2.2" evidence="1"/>
<dbReference type="EMBL" id="DQ821119">
    <property type="protein sequence ID" value="ABG79584.1"/>
    <property type="molecule type" value="Genomic_DNA"/>
</dbReference>
<dbReference type="RefSeq" id="YP_001023685.1">
    <property type="nucleotide sequence ID" value="NC_008829.1"/>
</dbReference>
<dbReference type="SMR" id="A2T317"/>
<dbReference type="GeneID" id="4788185"/>
<dbReference type="GO" id="GO:0009535">
    <property type="term" value="C:chloroplast thylakoid membrane"/>
    <property type="evidence" value="ECO:0007669"/>
    <property type="project" value="UniProtKB-SubCell"/>
</dbReference>
<dbReference type="GO" id="GO:0045259">
    <property type="term" value="C:proton-transporting ATP synthase complex"/>
    <property type="evidence" value="ECO:0007669"/>
    <property type="project" value="UniProtKB-KW"/>
</dbReference>
<dbReference type="GO" id="GO:0043531">
    <property type="term" value="F:ADP binding"/>
    <property type="evidence" value="ECO:0007669"/>
    <property type="project" value="TreeGrafter"/>
</dbReference>
<dbReference type="GO" id="GO:0005524">
    <property type="term" value="F:ATP binding"/>
    <property type="evidence" value="ECO:0007669"/>
    <property type="project" value="UniProtKB-UniRule"/>
</dbReference>
<dbReference type="GO" id="GO:0046933">
    <property type="term" value="F:proton-transporting ATP synthase activity, rotational mechanism"/>
    <property type="evidence" value="ECO:0007669"/>
    <property type="project" value="UniProtKB-UniRule"/>
</dbReference>
<dbReference type="CDD" id="cd18113">
    <property type="entry name" value="ATP-synt_F1_alpha_C"/>
    <property type="match status" value="1"/>
</dbReference>
<dbReference type="CDD" id="cd18116">
    <property type="entry name" value="ATP-synt_F1_alpha_N"/>
    <property type="match status" value="1"/>
</dbReference>
<dbReference type="CDD" id="cd01132">
    <property type="entry name" value="F1-ATPase_alpha_CD"/>
    <property type="match status" value="1"/>
</dbReference>
<dbReference type="FunFam" id="1.20.150.20:FF:000001">
    <property type="entry name" value="ATP synthase subunit alpha"/>
    <property type="match status" value="1"/>
</dbReference>
<dbReference type="FunFam" id="2.40.30.20:FF:000001">
    <property type="entry name" value="ATP synthase subunit alpha"/>
    <property type="match status" value="1"/>
</dbReference>
<dbReference type="FunFam" id="3.40.50.300:FF:000002">
    <property type="entry name" value="ATP synthase subunit alpha"/>
    <property type="match status" value="1"/>
</dbReference>
<dbReference type="Gene3D" id="2.40.30.20">
    <property type="match status" value="1"/>
</dbReference>
<dbReference type="Gene3D" id="1.20.150.20">
    <property type="entry name" value="ATP synthase alpha/beta chain, C-terminal domain"/>
    <property type="match status" value="1"/>
</dbReference>
<dbReference type="Gene3D" id="3.40.50.300">
    <property type="entry name" value="P-loop containing nucleotide triphosphate hydrolases"/>
    <property type="match status" value="1"/>
</dbReference>
<dbReference type="HAMAP" id="MF_01346">
    <property type="entry name" value="ATP_synth_alpha_bact"/>
    <property type="match status" value="1"/>
</dbReference>
<dbReference type="InterPro" id="IPR023366">
    <property type="entry name" value="ATP_synth_asu-like_sf"/>
</dbReference>
<dbReference type="InterPro" id="IPR000793">
    <property type="entry name" value="ATP_synth_asu_C"/>
</dbReference>
<dbReference type="InterPro" id="IPR038376">
    <property type="entry name" value="ATP_synth_asu_C_sf"/>
</dbReference>
<dbReference type="InterPro" id="IPR033732">
    <property type="entry name" value="ATP_synth_F1_a_nt-bd_dom"/>
</dbReference>
<dbReference type="InterPro" id="IPR005294">
    <property type="entry name" value="ATP_synth_F1_asu"/>
</dbReference>
<dbReference type="InterPro" id="IPR020003">
    <property type="entry name" value="ATPase_a/bsu_AS"/>
</dbReference>
<dbReference type="InterPro" id="IPR004100">
    <property type="entry name" value="ATPase_F1/V1/A1_a/bsu_N"/>
</dbReference>
<dbReference type="InterPro" id="IPR036121">
    <property type="entry name" value="ATPase_F1/V1/A1_a/bsu_N_sf"/>
</dbReference>
<dbReference type="InterPro" id="IPR000194">
    <property type="entry name" value="ATPase_F1/V1/A1_a/bsu_nucl-bd"/>
</dbReference>
<dbReference type="InterPro" id="IPR027417">
    <property type="entry name" value="P-loop_NTPase"/>
</dbReference>
<dbReference type="NCBIfam" id="TIGR00962">
    <property type="entry name" value="atpA"/>
    <property type="match status" value="1"/>
</dbReference>
<dbReference type="NCBIfam" id="NF009884">
    <property type="entry name" value="PRK13343.1"/>
    <property type="match status" value="1"/>
</dbReference>
<dbReference type="PANTHER" id="PTHR48082">
    <property type="entry name" value="ATP SYNTHASE SUBUNIT ALPHA, MITOCHONDRIAL"/>
    <property type="match status" value="1"/>
</dbReference>
<dbReference type="PANTHER" id="PTHR48082:SF2">
    <property type="entry name" value="ATP SYNTHASE SUBUNIT ALPHA, MITOCHONDRIAL"/>
    <property type="match status" value="1"/>
</dbReference>
<dbReference type="Pfam" id="PF00006">
    <property type="entry name" value="ATP-synt_ab"/>
    <property type="match status" value="1"/>
</dbReference>
<dbReference type="Pfam" id="PF00306">
    <property type="entry name" value="ATP-synt_ab_C"/>
    <property type="match status" value="1"/>
</dbReference>
<dbReference type="Pfam" id="PF02874">
    <property type="entry name" value="ATP-synt_ab_N"/>
    <property type="match status" value="1"/>
</dbReference>
<dbReference type="PIRSF" id="PIRSF039088">
    <property type="entry name" value="F_ATPase_subunit_alpha"/>
    <property type="match status" value="1"/>
</dbReference>
<dbReference type="SUPFAM" id="SSF47917">
    <property type="entry name" value="C-terminal domain of alpha and beta subunits of F1 ATP synthase"/>
    <property type="match status" value="1"/>
</dbReference>
<dbReference type="SUPFAM" id="SSF50615">
    <property type="entry name" value="N-terminal domain of alpha and beta subunits of F1 ATP synthase"/>
    <property type="match status" value="1"/>
</dbReference>
<dbReference type="SUPFAM" id="SSF52540">
    <property type="entry name" value="P-loop containing nucleoside triphosphate hydrolases"/>
    <property type="match status" value="1"/>
</dbReference>
<dbReference type="PROSITE" id="PS00152">
    <property type="entry name" value="ATPASE_ALPHA_BETA"/>
    <property type="match status" value="1"/>
</dbReference>
<gene>
    <name evidence="1" type="primary">atpA</name>
</gene>
<protein>
    <recommendedName>
        <fullName evidence="1">ATP synthase subunit alpha, chloroplastic</fullName>
        <ecNumber evidence="1">7.1.2.2</ecNumber>
    </recommendedName>
    <alternativeName>
        <fullName evidence="1">ATP synthase F1 sector subunit alpha</fullName>
    </alternativeName>
    <alternativeName>
        <fullName evidence="1">F-ATPase subunit alpha</fullName>
    </alternativeName>
</protein>
<name>ATPA_ANGEV</name>
<keyword id="KW-0066">ATP synthesis</keyword>
<keyword id="KW-0067">ATP-binding</keyword>
<keyword id="KW-0139">CF(1)</keyword>
<keyword id="KW-0150">Chloroplast</keyword>
<keyword id="KW-0375">Hydrogen ion transport</keyword>
<keyword id="KW-0406">Ion transport</keyword>
<keyword id="KW-0472">Membrane</keyword>
<keyword id="KW-0547">Nucleotide-binding</keyword>
<keyword id="KW-0934">Plastid</keyword>
<keyword id="KW-0793">Thylakoid</keyword>
<keyword id="KW-1278">Translocase</keyword>
<keyword id="KW-0813">Transport</keyword>